<sequence length="108" mass="11373">MASRRSAAAKKEDFSFEAAATQSAHEAQEGFPSSVIIKLVLVTVAMICAPLGTYFGTLNTICGGDSSYAGALAAISVNVVLIIYLIIAAREDTGESEEERKGKEGKEE</sequence>
<gene>
    <name evidence="1" type="primary">VMA21</name>
    <name type="ORF">HCAG_04315</name>
</gene>
<evidence type="ECO:0000255" key="1">
    <source>
        <dbReference type="HAMAP-Rule" id="MF_03058"/>
    </source>
</evidence>
<keyword id="KW-0968">Cytoplasmic vesicle</keyword>
<keyword id="KW-0256">Endoplasmic reticulum</keyword>
<keyword id="KW-0472">Membrane</keyword>
<keyword id="KW-1185">Reference proteome</keyword>
<keyword id="KW-0812">Transmembrane</keyword>
<keyword id="KW-1133">Transmembrane helix</keyword>
<proteinExistence type="inferred from homology"/>
<protein>
    <recommendedName>
        <fullName evidence="1">Vacuolar ATPase assembly integral membrane protein VMA21</fullName>
    </recommendedName>
</protein>
<reference key="1">
    <citation type="journal article" date="2009" name="Genome Res.">
        <title>Comparative genomic analyses of the human fungal pathogens Coccidioides and their relatives.</title>
        <authorList>
            <person name="Sharpton T.J."/>
            <person name="Stajich J.E."/>
            <person name="Rounsley S.D."/>
            <person name="Gardner M.J."/>
            <person name="Wortman J.R."/>
            <person name="Jordar V.S."/>
            <person name="Maiti R."/>
            <person name="Kodira C.D."/>
            <person name="Neafsey D.E."/>
            <person name="Zeng Q."/>
            <person name="Hung C.-Y."/>
            <person name="McMahan C."/>
            <person name="Muszewska A."/>
            <person name="Grynberg M."/>
            <person name="Mandel M.A."/>
            <person name="Kellner E.M."/>
            <person name="Barker B.M."/>
            <person name="Galgiani J.N."/>
            <person name="Orbach M.J."/>
            <person name="Kirkland T.N."/>
            <person name="Cole G.T."/>
            <person name="Henn M.R."/>
            <person name="Birren B.W."/>
            <person name="Taylor J.W."/>
        </authorList>
    </citation>
    <scope>NUCLEOTIDE SEQUENCE [LARGE SCALE GENOMIC DNA]</scope>
    <source>
        <strain>NAm1 / WU24</strain>
    </source>
</reference>
<organism>
    <name type="scientific">Ajellomyces capsulatus (strain NAm1 / WU24)</name>
    <name type="common">Darling's disease fungus</name>
    <name type="synonym">Histoplasma capsulatum</name>
    <dbReference type="NCBI Taxonomy" id="2059318"/>
    <lineage>
        <taxon>Eukaryota</taxon>
        <taxon>Fungi</taxon>
        <taxon>Dikarya</taxon>
        <taxon>Ascomycota</taxon>
        <taxon>Pezizomycotina</taxon>
        <taxon>Eurotiomycetes</taxon>
        <taxon>Eurotiomycetidae</taxon>
        <taxon>Onygenales</taxon>
        <taxon>Ajellomycetaceae</taxon>
        <taxon>Histoplasma</taxon>
    </lineage>
</organism>
<comment type="function">
    <text evidence="1">Required for the assembly of the V0 complex of the vacuolar ATPase (V-ATPase) in the endoplasmic reticulum.</text>
</comment>
<comment type="subcellular location">
    <subcellularLocation>
        <location evidence="1">Endoplasmic reticulum membrane</location>
        <topology evidence="1">Multi-pass membrane protein</topology>
    </subcellularLocation>
    <subcellularLocation>
        <location evidence="1">Endoplasmic reticulum-Golgi intermediate compartment membrane</location>
        <topology evidence="1">Multi-pass membrane protein</topology>
    </subcellularLocation>
    <subcellularLocation>
        <location evidence="1">Cytoplasmic vesicle</location>
        <location evidence="1">COPII-coated vesicle membrane</location>
        <topology evidence="1">Multi-pass membrane protein</topology>
    </subcellularLocation>
</comment>
<comment type="similarity">
    <text evidence="1">Belongs to the VMA21 family.</text>
</comment>
<feature type="chain" id="PRO_0000377577" description="Vacuolar ATPase assembly integral membrane protein VMA21">
    <location>
        <begin position="1"/>
        <end position="108"/>
    </location>
</feature>
<feature type="topological domain" description="Cytoplasmic" evidence="1">
    <location>
        <begin position="1"/>
        <end position="34"/>
    </location>
</feature>
<feature type="transmembrane region" description="Helical" evidence="1">
    <location>
        <begin position="35"/>
        <end position="55"/>
    </location>
</feature>
<feature type="topological domain" description="Lumenal" evidence="1">
    <location>
        <begin position="56"/>
        <end position="68"/>
    </location>
</feature>
<feature type="transmembrane region" description="Helical" evidence="1">
    <location>
        <begin position="69"/>
        <end position="89"/>
    </location>
</feature>
<feature type="topological domain" description="Cytoplasmic" evidence="1">
    <location>
        <begin position="90"/>
        <end position="108"/>
    </location>
</feature>
<name>VMA21_AJECN</name>
<accession>A6R3V7</accession>
<dbReference type="EMBL" id="CH476658">
    <property type="protein sequence ID" value="EDN07805.1"/>
    <property type="molecule type" value="Genomic_DNA"/>
</dbReference>
<dbReference type="SMR" id="A6R3V7"/>
<dbReference type="STRING" id="339724.A6R3V7"/>
<dbReference type="KEGG" id="aje:HCAG_04315"/>
<dbReference type="VEuPathDB" id="FungiDB:HCAG_04315"/>
<dbReference type="HOGENOM" id="CLU_154717_1_1_1"/>
<dbReference type="OMA" id="AMKEDQT"/>
<dbReference type="OrthoDB" id="10614at299071"/>
<dbReference type="Proteomes" id="UP000009297">
    <property type="component" value="Unassembled WGS sequence"/>
</dbReference>
<dbReference type="GO" id="GO:0005789">
    <property type="term" value="C:endoplasmic reticulum membrane"/>
    <property type="evidence" value="ECO:0007669"/>
    <property type="project" value="UniProtKB-SubCell"/>
</dbReference>
<dbReference type="GO" id="GO:0033116">
    <property type="term" value="C:endoplasmic reticulum-Golgi intermediate compartment membrane"/>
    <property type="evidence" value="ECO:0007669"/>
    <property type="project" value="UniProtKB-SubCell"/>
</dbReference>
<dbReference type="GO" id="GO:0012507">
    <property type="term" value="C:ER to Golgi transport vesicle membrane"/>
    <property type="evidence" value="ECO:0007669"/>
    <property type="project" value="UniProtKB-SubCell"/>
</dbReference>
<dbReference type="GO" id="GO:0070072">
    <property type="term" value="P:vacuolar proton-transporting V-type ATPase complex assembly"/>
    <property type="evidence" value="ECO:0007669"/>
    <property type="project" value="UniProtKB-UniRule"/>
</dbReference>
<dbReference type="HAMAP" id="MF_03058">
    <property type="entry name" value="VMA21"/>
    <property type="match status" value="1"/>
</dbReference>
<dbReference type="InterPro" id="IPR019013">
    <property type="entry name" value="Vma21"/>
</dbReference>
<dbReference type="PANTHER" id="PTHR31792">
    <property type="entry name" value="VACUOLAR ATPASE ASSEMBLY INTEGRAL MEMBRANE PROTEIN VMA21"/>
    <property type="match status" value="1"/>
</dbReference>
<dbReference type="PANTHER" id="PTHR31792:SF3">
    <property type="entry name" value="VACUOLAR ATPASE ASSEMBLY INTEGRAL MEMBRANE PROTEIN VMA21"/>
    <property type="match status" value="1"/>
</dbReference>
<dbReference type="Pfam" id="PF09446">
    <property type="entry name" value="VMA21"/>
    <property type="match status" value="1"/>
</dbReference>